<evidence type="ECO:0000250" key="1"/>
<evidence type="ECO:0000255" key="2"/>
<evidence type="ECO:0000255" key="3">
    <source>
        <dbReference type="PROSITE-ProRule" id="PRU10040"/>
    </source>
</evidence>
<evidence type="ECO:0000269" key="4">
    <source>
    </source>
</evidence>
<evidence type="ECO:0000305" key="5"/>
<proteinExistence type="evidence at transcript level"/>
<protein>
    <recommendedName>
        <fullName>Probable pectinesterase/pectinesterase inhibitor 7</fullName>
    </recommendedName>
    <domain>
        <recommendedName>
            <fullName>Pectinesterase inhibitor 7</fullName>
        </recommendedName>
        <alternativeName>
            <fullName>Pectin methylesterase inhibitor 7</fullName>
        </alternativeName>
    </domain>
    <domain>
        <recommendedName>
            <fullName>Pectinesterase 7</fullName>
            <shortName>PE 7</shortName>
            <ecNumber>3.1.1.11</ecNumber>
        </recommendedName>
        <alternativeName>
            <fullName>Pectin methylesterase 1</fullName>
            <shortName>AtPME1</shortName>
        </alternativeName>
        <alternativeName>
            <fullName>Pectin methylesterase 7</fullName>
        </alternativeName>
    </domain>
</protein>
<organism>
    <name type="scientific">Arabidopsis thaliana</name>
    <name type="common">Mouse-ear cress</name>
    <dbReference type="NCBI Taxonomy" id="3702"/>
    <lineage>
        <taxon>Eukaryota</taxon>
        <taxon>Viridiplantae</taxon>
        <taxon>Streptophyta</taxon>
        <taxon>Embryophyta</taxon>
        <taxon>Tracheophyta</taxon>
        <taxon>Spermatophyta</taxon>
        <taxon>Magnoliopsida</taxon>
        <taxon>eudicotyledons</taxon>
        <taxon>Gunneridae</taxon>
        <taxon>Pentapetalae</taxon>
        <taxon>rosids</taxon>
        <taxon>malvids</taxon>
        <taxon>Brassicales</taxon>
        <taxon>Brassicaceae</taxon>
        <taxon>Camelineae</taxon>
        <taxon>Arabidopsis</taxon>
    </lineage>
</organism>
<accession>Q9SRX4</accession>
<accession>Q0WPU4</accession>
<keyword id="KW-0063">Aspartyl esterase</keyword>
<keyword id="KW-0134">Cell wall</keyword>
<keyword id="KW-0961">Cell wall biogenesis/degradation</keyword>
<keyword id="KW-1015">Disulfide bond</keyword>
<keyword id="KW-0325">Glycoprotein</keyword>
<keyword id="KW-0378">Hydrolase</keyword>
<keyword id="KW-1185">Reference proteome</keyword>
<keyword id="KW-0964">Secreted</keyword>
<keyword id="KW-0732">Signal</keyword>
<gene>
    <name type="primary">PME7</name>
    <name type="synonym">ARATH1</name>
    <name type="ordered locus">At1g02810</name>
    <name type="ORF">F22D16.20</name>
</gene>
<reference key="1">
    <citation type="journal article" date="2000" name="Nature">
        <title>Sequence and analysis of chromosome 1 of the plant Arabidopsis thaliana.</title>
        <authorList>
            <person name="Theologis A."/>
            <person name="Ecker J.R."/>
            <person name="Palm C.J."/>
            <person name="Federspiel N.A."/>
            <person name="Kaul S."/>
            <person name="White O."/>
            <person name="Alonso J."/>
            <person name="Altafi H."/>
            <person name="Araujo R."/>
            <person name="Bowman C.L."/>
            <person name="Brooks S.Y."/>
            <person name="Buehler E."/>
            <person name="Chan A."/>
            <person name="Chao Q."/>
            <person name="Chen H."/>
            <person name="Cheuk R.F."/>
            <person name="Chin C.W."/>
            <person name="Chung M.K."/>
            <person name="Conn L."/>
            <person name="Conway A.B."/>
            <person name="Conway A.R."/>
            <person name="Creasy T.H."/>
            <person name="Dewar K."/>
            <person name="Dunn P."/>
            <person name="Etgu P."/>
            <person name="Feldblyum T.V."/>
            <person name="Feng J.-D."/>
            <person name="Fong B."/>
            <person name="Fujii C.Y."/>
            <person name="Gill J.E."/>
            <person name="Goldsmith A.D."/>
            <person name="Haas B."/>
            <person name="Hansen N.F."/>
            <person name="Hughes B."/>
            <person name="Huizar L."/>
            <person name="Hunter J.L."/>
            <person name="Jenkins J."/>
            <person name="Johnson-Hopson C."/>
            <person name="Khan S."/>
            <person name="Khaykin E."/>
            <person name="Kim C.J."/>
            <person name="Koo H.L."/>
            <person name="Kremenetskaia I."/>
            <person name="Kurtz D.B."/>
            <person name="Kwan A."/>
            <person name="Lam B."/>
            <person name="Langin-Hooper S."/>
            <person name="Lee A."/>
            <person name="Lee J.M."/>
            <person name="Lenz C.A."/>
            <person name="Li J.H."/>
            <person name="Li Y.-P."/>
            <person name="Lin X."/>
            <person name="Liu S.X."/>
            <person name="Liu Z.A."/>
            <person name="Luros J.S."/>
            <person name="Maiti R."/>
            <person name="Marziali A."/>
            <person name="Militscher J."/>
            <person name="Miranda M."/>
            <person name="Nguyen M."/>
            <person name="Nierman W.C."/>
            <person name="Osborne B.I."/>
            <person name="Pai G."/>
            <person name="Peterson J."/>
            <person name="Pham P.K."/>
            <person name="Rizzo M."/>
            <person name="Rooney T."/>
            <person name="Rowley D."/>
            <person name="Sakano H."/>
            <person name="Salzberg S.L."/>
            <person name="Schwartz J.R."/>
            <person name="Shinn P."/>
            <person name="Southwick A.M."/>
            <person name="Sun H."/>
            <person name="Tallon L.J."/>
            <person name="Tambunga G."/>
            <person name="Toriumi M.J."/>
            <person name="Town C.D."/>
            <person name="Utterback T."/>
            <person name="Van Aken S."/>
            <person name="Vaysberg M."/>
            <person name="Vysotskaia V.S."/>
            <person name="Walker M."/>
            <person name="Wu D."/>
            <person name="Yu G."/>
            <person name="Fraser C.M."/>
            <person name="Venter J.C."/>
            <person name="Davis R.W."/>
        </authorList>
    </citation>
    <scope>NUCLEOTIDE SEQUENCE [LARGE SCALE GENOMIC DNA]</scope>
    <source>
        <strain>cv. Columbia</strain>
    </source>
</reference>
<reference key="2">
    <citation type="journal article" date="2017" name="Plant J.">
        <title>Araport11: a complete reannotation of the Arabidopsis thaliana reference genome.</title>
        <authorList>
            <person name="Cheng C.Y."/>
            <person name="Krishnakumar V."/>
            <person name="Chan A.P."/>
            <person name="Thibaud-Nissen F."/>
            <person name="Schobel S."/>
            <person name="Town C.D."/>
        </authorList>
    </citation>
    <scope>GENOME REANNOTATION</scope>
    <source>
        <strain>cv. Columbia</strain>
    </source>
</reference>
<reference key="3">
    <citation type="submission" date="2006-07" db="EMBL/GenBank/DDBJ databases">
        <title>Large-scale analysis of RIKEN Arabidopsis full-length (RAFL) cDNAs.</title>
        <authorList>
            <person name="Totoki Y."/>
            <person name="Seki M."/>
            <person name="Ishida J."/>
            <person name="Nakajima M."/>
            <person name="Enju A."/>
            <person name="Kamiya A."/>
            <person name="Narusaka M."/>
            <person name="Shin-i T."/>
            <person name="Nakagawa M."/>
            <person name="Sakamoto N."/>
            <person name="Oishi K."/>
            <person name="Kohara Y."/>
            <person name="Kobayashi M."/>
            <person name="Toyoda A."/>
            <person name="Sakaki Y."/>
            <person name="Sakurai T."/>
            <person name="Iida K."/>
            <person name="Akiyama K."/>
            <person name="Satou M."/>
            <person name="Toyoda T."/>
            <person name="Konagaya A."/>
            <person name="Carninci P."/>
            <person name="Kawai J."/>
            <person name="Hayashizaki Y."/>
            <person name="Shinozaki K."/>
        </authorList>
    </citation>
    <scope>NUCLEOTIDE SEQUENCE [LARGE SCALE MRNA]</scope>
    <source>
        <strain>cv. Columbia</strain>
    </source>
</reference>
<reference key="4">
    <citation type="submission" date="2007-03" db="EMBL/GenBank/DDBJ databases">
        <title>Arabidopsis ORF clones.</title>
        <authorList>
            <person name="Bautista V.R."/>
            <person name="Kim C.J."/>
            <person name="Chen H."/>
            <person name="Wu S.Y."/>
            <person name="De Los Reyes C."/>
            <person name="Ecker J.R."/>
        </authorList>
    </citation>
    <scope>NUCLEOTIDE SEQUENCE [MRNA]</scope>
    <source>
        <strain>cv. Columbia</strain>
    </source>
</reference>
<reference key="5">
    <citation type="journal article" date="2004" name="Carbohydr. Res.">
        <title>Pectin methylesterases: sequence-structural features and phylogenetic relationships.</title>
        <authorList>
            <person name="Markovic O."/>
            <person name="Janecek S."/>
        </authorList>
    </citation>
    <scope>GENE FAMILY</scope>
    <scope>NOMENCLATURE</scope>
</reference>
<reference key="6">
    <citation type="journal article" date="2006" name="Planta">
        <title>Comprehensive expression profiling of the pectin methylesterase gene family during silique development in Arabidopsis thaliana.</title>
        <authorList>
            <person name="Louvet R."/>
            <person name="Cavel E."/>
            <person name="Gutierrez L."/>
            <person name="Guenin S."/>
            <person name="Roger D."/>
            <person name="Gillet F."/>
            <person name="Guerineau F."/>
            <person name="Pelloux J."/>
        </authorList>
    </citation>
    <scope>TISSUE SPECIFICITY</scope>
    <scope>DEVELOPMENTAL STAGE</scope>
</reference>
<sequence length="579" mass="63952">MESPIFILITLSFFLQSVLASSQTLSNSSTICKTTPDPKYCKSVFPHSQGNVQQYGCFSIRKSLSQSRKFIRTVDRYIKRNAHLSQPAVIRALQDCRFLAGLTMDYLLTSFETVNDTSAKTSFKPLSFPKADDIQTLLSAALTNEQTCLEGLTTAASYSATWTVRTGVALPLVNDTKLLGVSLALFTKGWVPKKKKRAGFAWAQPRSGSSTHTKPFRLFRNGALPLKMTEKTKAVYESLSRRKLADGDSNGDGDDGSMVLISDIVTVSQDGTGNFTNITAAVAAAPNNTDGSAGFFLIYVTAGIYEEYISIAKNKRYMMMIGDGINQTVVTGNRSVVDGWTTFNSATFAVTAPNFVAVNITFRNTAGPEKHQAVALRSGADFSIFYSCSFEAYQDTLYTHSLRQFYRECDVYGTVDFIFGNAAVVFQNCNLYPRKPMPNQFNAITAQGRSDPNQNTGTSIQNCTIKPADDLVSSNYTVKTYLGRPWKEYSRTVYMQSYIDGFVEPVGWREWNGDFALSTLYYAEYNNTGPGSNTTNRVTWPGYHVINSTDAANFTVTGLFIEADWIWKTGVPYTSGLIS</sequence>
<feature type="signal peptide" evidence="2">
    <location>
        <begin position="1"/>
        <end position="20"/>
    </location>
</feature>
<feature type="chain" id="PRO_0000371664" description="Probable pectinesterase/pectinesterase inhibitor 7">
    <location>
        <begin position="21"/>
        <end position="579"/>
    </location>
</feature>
<feature type="region of interest" description="Pectinesterase inhibitor 7">
    <location>
        <begin position="22"/>
        <end position="185"/>
    </location>
</feature>
<feature type="region of interest" description="Pectinesterase 7">
    <location>
        <begin position="265"/>
        <end position="564"/>
    </location>
</feature>
<feature type="active site" description="Proton donor; for pectinesterase activity" evidence="3">
    <location>
        <position position="395"/>
    </location>
</feature>
<feature type="active site" description="Nucleophile; for pectinesterase activity" evidence="3">
    <location>
        <position position="416"/>
    </location>
</feature>
<feature type="binding site" evidence="1">
    <location>
        <position position="342"/>
    </location>
    <ligand>
        <name>substrate</name>
        <note>for pectinesterase activity</note>
    </ligand>
</feature>
<feature type="binding site" evidence="1">
    <location>
        <position position="372"/>
    </location>
    <ligand>
        <name>substrate</name>
        <note>for pectinesterase activity</note>
    </ligand>
</feature>
<feature type="binding site" evidence="1">
    <location>
        <position position="484"/>
    </location>
    <ligand>
        <name>substrate</name>
        <note>for pectinesterase activity</note>
    </ligand>
</feature>
<feature type="binding site" evidence="1">
    <location>
        <position position="486"/>
    </location>
    <ligand>
        <name>substrate</name>
        <note>for pectinesterase activity</note>
    </ligand>
</feature>
<feature type="site" description="Transition state stabilizer" evidence="1">
    <location>
        <position position="394"/>
    </location>
</feature>
<feature type="glycosylation site" description="N-linked (GlcNAc...) asparagine" evidence="2">
    <location>
        <position position="27"/>
    </location>
</feature>
<feature type="glycosylation site" description="N-linked (GlcNAc...) asparagine" evidence="2">
    <location>
        <position position="115"/>
    </location>
</feature>
<feature type="glycosylation site" description="N-linked (GlcNAc...) asparagine" evidence="2">
    <location>
        <position position="174"/>
    </location>
</feature>
<feature type="glycosylation site" description="N-linked (GlcNAc...) asparagine" evidence="2">
    <location>
        <position position="274"/>
    </location>
</feature>
<feature type="glycosylation site" description="N-linked (GlcNAc...) asparagine" evidence="2">
    <location>
        <position position="277"/>
    </location>
</feature>
<feature type="glycosylation site" description="N-linked (GlcNAc...) asparagine" evidence="2">
    <location>
        <position position="287"/>
    </location>
</feature>
<feature type="glycosylation site" description="N-linked (GlcNAc...) asparagine" evidence="2">
    <location>
        <position position="326"/>
    </location>
</feature>
<feature type="glycosylation site" description="N-linked (GlcNAc...) asparagine" evidence="2">
    <location>
        <position position="333"/>
    </location>
</feature>
<feature type="glycosylation site" description="N-linked (GlcNAc...) asparagine" evidence="2">
    <location>
        <position position="359"/>
    </location>
</feature>
<feature type="glycosylation site" description="N-linked (GlcNAc...) asparagine" evidence="2">
    <location>
        <position position="462"/>
    </location>
</feature>
<feature type="glycosylation site" description="N-linked (GlcNAc...) asparagine" evidence="2">
    <location>
        <position position="475"/>
    </location>
</feature>
<feature type="glycosylation site" description="N-linked (GlcNAc...) asparagine" evidence="2">
    <location>
        <position position="526"/>
    </location>
</feature>
<feature type="glycosylation site" description="N-linked (GlcNAc...) asparagine" evidence="2">
    <location>
        <position position="533"/>
    </location>
</feature>
<feature type="glycosylation site" description="N-linked (GlcNAc...) asparagine" evidence="2">
    <location>
        <position position="547"/>
    </location>
</feature>
<feature type="glycosylation site" description="N-linked (GlcNAc...) asparagine" evidence="2">
    <location>
        <position position="553"/>
    </location>
</feature>
<feature type="disulfide bond" evidence="1">
    <location>
        <begin position="409"/>
        <end position="429"/>
    </location>
</feature>
<feature type="sequence conflict" description="In Ref. 3; BAF00855." evidence="5" ref="3">
    <original>D</original>
    <variation>N</variation>
    <location>
        <position position="416"/>
    </location>
</feature>
<dbReference type="EC" id="3.1.1.11"/>
<dbReference type="EMBL" id="AC009525">
    <property type="protein sequence ID" value="AAF02886.1"/>
    <property type="molecule type" value="Genomic_DNA"/>
</dbReference>
<dbReference type="EMBL" id="CP002684">
    <property type="protein sequence ID" value="AEE27472.1"/>
    <property type="molecule type" value="Genomic_DNA"/>
</dbReference>
<dbReference type="EMBL" id="AK228966">
    <property type="protein sequence ID" value="BAF00855.1"/>
    <property type="molecule type" value="mRNA"/>
</dbReference>
<dbReference type="EMBL" id="BT030371">
    <property type="protein sequence ID" value="ABO38784.1"/>
    <property type="molecule type" value="mRNA"/>
</dbReference>
<dbReference type="PIR" id="B86158">
    <property type="entry name" value="B86158"/>
</dbReference>
<dbReference type="RefSeq" id="NP_563662.1">
    <property type="nucleotide sequence ID" value="NM_100160.4"/>
</dbReference>
<dbReference type="SMR" id="Q9SRX4"/>
<dbReference type="BioGRID" id="23318">
    <property type="interactions" value="1"/>
</dbReference>
<dbReference type="FunCoup" id="Q9SRX4">
    <property type="interactions" value="199"/>
</dbReference>
<dbReference type="STRING" id="3702.Q9SRX4"/>
<dbReference type="GlyCosmos" id="Q9SRX4">
    <property type="glycosylation" value="15 sites, No reported glycans"/>
</dbReference>
<dbReference type="GlyGen" id="Q9SRX4">
    <property type="glycosylation" value="15 sites"/>
</dbReference>
<dbReference type="PaxDb" id="3702-AT1G02810.1"/>
<dbReference type="ProteomicsDB" id="234681"/>
<dbReference type="EnsemblPlants" id="AT1G02810.1">
    <property type="protein sequence ID" value="AT1G02810.1"/>
    <property type="gene ID" value="AT1G02810"/>
</dbReference>
<dbReference type="GeneID" id="838078"/>
<dbReference type="Gramene" id="AT1G02810.1">
    <property type="protein sequence ID" value="AT1G02810.1"/>
    <property type="gene ID" value="AT1G02810"/>
</dbReference>
<dbReference type="KEGG" id="ath:AT1G02810"/>
<dbReference type="Araport" id="AT1G02810"/>
<dbReference type="TAIR" id="AT1G02810"/>
<dbReference type="eggNOG" id="ENOG502QUB9">
    <property type="taxonomic scope" value="Eukaryota"/>
</dbReference>
<dbReference type="HOGENOM" id="CLU_012243_9_1_1"/>
<dbReference type="InParanoid" id="Q9SRX4"/>
<dbReference type="OMA" id="CKSVFPH"/>
<dbReference type="PhylomeDB" id="Q9SRX4"/>
<dbReference type="BioCyc" id="ARA:AT1G02810-MONOMER"/>
<dbReference type="UniPathway" id="UPA00545">
    <property type="reaction ID" value="UER00823"/>
</dbReference>
<dbReference type="PRO" id="PR:Q9SRX4"/>
<dbReference type="Proteomes" id="UP000006548">
    <property type="component" value="Chromosome 1"/>
</dbReference>
<dbReference type="ExpressionAtlas" id="Q9SRX4">
    <property type="expression patterns" value="baseline and differential"/>
</dbReference>
<dbReference type="GO" id="GO:0005576">
    <property type="term" value="C:extracellular region"/>
    <property type="evidence" value="ECO:0007669"/>
    <property type="project" value="UniProtKB-KW"/>
</dbReference>
<dbReference type="GO" id="GO:0004857">
    <property type="term" value="F:enzyme inhibitor activity"/>
    <property type="evidence" value="ECO:0007669"/>
    <property type="project" value="InterPro"/>
</dbReference>
<dbReference type="GO" id="GO:0030599">
    <property type="term" value="F:pectinesterase activity"/>
    <property type="evidence" value="ECO:0007669"/>
    <property type="project" value="UniProtKB-EC"/>
</dbReference>
<dbReference type="GO" id="GO:0042545">
    <property type="term" value="P:cell wall modification"/>
    <property type="evidence" value="ECO:0007669"/>
    <property type="project" value="InterPro"/>
</dbReference>
<dbReference type="GO" id="GO:0045490">
    <property type="term" value="P:pectin catabolic process"/>
    <property type="evidence" value="ECO:0007669"/>
    <property type="project" value="UniProtKB-UniPathway"/>
</dbReference>
<dbReference type="CDD" id="cd15798">
    <property type="entry name" value="PMEI-like_3"/>
    <property type="match status" value="1"/>
</dbReference>
<dbReference type="FunFam" id="1.20.140.40:FF:000004">
    <property type="entry name" value="Pectinesterase"/>
    <property type="match status" value="1"/>
</dbReference>
<dbReference type="FunFam" id="2.160.20.10:FF:000001">
    <property type="entry name" value="Pectinesterase"/>
    <property type="match status" value="1"/>
</dbReference>
<dbReference type="Gene3D" id="1.20.140.40">
    <property type="entry name" value="Invertase/pectin methylesterase inhibitor family protein"/>
    <property type="match status" value="1"/>
</dbReference>
<dbReference type="Gene3D" id="2.160.20.10">
    <property type="entry name" value="Single-stranded right-handed beta-helix, Pectin lyase-like"/>
    <property type="match status" value="1"/>
</dbReference>
<dbReference type="InterPro" id="IPR035513">
    <property type="entry name" value="Invertase/methylesterase_inhib"/>
</dbReference>
<dbReference type="InterPro" id="IPR012334">
    <property type="entry name" value="Pectin_lyas_fold"/>
</dbReference>
<dbReference type="InterPro" id="IPR011050">
    <property type="entry name" value="Pectin_lyase_fold/virulence"/>
</dbReference>
<dbReference type="InterPro" id="IPR033131">
    <property type="entry name" value="Pectinesterase_Asp_AS"/>
</dbReference>
<dbReference type="InterPro" id="IPR000070">
    <property type="entry name" value="Pectinesterase_cat"/>
</dbReference>
<dbReference type="InterPro" id="IPR006501">
    <property type="entry name" value="Pectinesterase_inhib_dom"/>
</dbReference>
<dbReference type="PANTHER" id="PTHR31707">
    <property type="entry name" value="PECTINESTERASE"/>
    <property type="match status" value="1"/>
</dbReference>
<dbReference type="Pfam" id="PF01095">
    <property type="entry name" value="Pectinesterase"/>
    <property type="match status" value="1"/>
</dbReference>
<dbReference type="Pfam" id="PF04043">
    <property type="entry name" value="PMEI"/>
    <property type="match status" value="1"/>
</dbReference>
<dbReference type="SMART" id="SM00856">
    <property type="entry name" value="PMEI"/>
    <property type="match status" value="1"/>
</dbReference>
<dbReference type="SUPFAM" id="SSF51126">
    <property type="entry name" value="Pectin lyase-like"/>
    <property type="match status" value="1"/>
</dbReference>
<dbReference type="SUPFAM" id="SSF101148">
    <property type="entry name" value="Plant invertase/pectin methylesterase inhibitor"/>
    <property type="match status" value="1"/>
</dbReference>
<dbReference type="PROSITE" id="PS00503">
    <property type="entry name" value="PECTINESTERASE_2"/>
    <property type="match status" value="1"/>
</dbReference>
<comment type="function">
    <text evidence="1">Acts in the modification of cell walls via demethylesterification of cell wall pectin.</text>
</comment>
<comment type="catalytic activity">
    <reaction>
        <text>[(1-&gt;4)-alpha-D-galacturonosyl methyl ester](n) + n H2O = [(1-&gt;4)-alpha-D-galacturonosyl](n) + n methanol + n H(+)</text>
        <dbReference type="Rhea" id="RHEA:22380"/>
        <dbReference type="Rhea" id="RHEA-COMP:14570"/>
        <dbReference type="Rhea" id="RHEA-COMP:14573"/>
        <dbReference type="ChEBI" id="CHEBI:15377"/>
        <dbReference type="ChEBI" id="CHEBI:15378"/>
        <dbReference type="ChEBI" id="CHEBI:17790"/>
        <dbReference type="ChEBI" id="CHEBI:140522"/>
        <dbReference type="ChEBI" id="CHEBI:140523"/>
        <dbReference type="EC" id="3.1.1.11"/>
    </reaction>
</comment>
<comment type="pathway">
    <text>Glycan metabolism; pectin degradation; 2-dehydro-3-deoxy-D-gluconate from pectin: step 1/5.</text>
</comment>
<comment type="subcellular location">
    <subcellularLocation>
        <location evidence="1">Secreted</location>
        <location evidence="1">Cell wall</location>
    </subcellularLocation>
</comment>
<comment type="tissue specificity">
    <text evidence="4">Expressed in siliques.</text>
</comment>
<comment type="developmental stage">
    <text evidence="4">Expressed throughout silique development.</text>
</comment>
<comment type="miscellaneous">
    <text>The PMEI region may act as an autoinhibitory domain and prevent untimely PME activity during transport.</text>
</comment>
<comment type="similarity">
    <text evidence="5">In the N-terminal section; belongs to the PMEI family.</text>
</comment>
<comment type="similarity">
    <text evidence="5">In the C-terminal section; belongs to the pectinesterase family.</text>
</comment>
<name>PME7_ARATH</name>